<protein>
    <recommendedName>
        <fullName evidence="1">RNA pyrophosphohydrolase</fullName>
        <ecNumber evidence="1">3.6.1.-</ecNumber>
    </recommendedName>
    <alternativeName>
        <fullName evidence="1">(Di)nucleoside polyphosphate hydrolase</fullName>
    </alternativeName>
</protein>
<gene>
    <name evidence="1" type="primary">rppH</name>
    <name evidence="1" type="synonym">nudH</name>
    <name type="ordered locus">Pput_5053</name>
</gene>
<feature type="chain" id="PRO_1000021974" description="RNA pyrophosphohydrolase">
    <location>
        <begin position="1"/>
        <end position="159"/>
    </location>
</feature>
<feature type="domain" description="Nudix hydrolase" evidence="1">
    <location>
        <begin position="6"/>
        <end position="149"/>
    </location>
</feature>
<feature type="short sequence motif" description="Nudix box">
    <location>
        <begin position="38"/>
        <end position="59"/>
    </location>
</feature>
<name>RPPH_PSEP1</name>
<accession>A5WAL1</accession>
<organism>
    <name type="scientific">Pseudomonas putida (strain ATCC 700007 / DSM 6899 / JCM 31910 / BCRC 17059 / LMG 24140 / F1)</name>
    <dbReference type="NCBI Taxonomy" id="351746"/>
    <lineage>
        <taxon>Bacteria</taxon>
        <taxon>Pseudomonadati</taxon>
        <taxon>Pseudomonadota</taxon>
        <taxon>Gammaproteobacteria</taxon>
        <taxon>Pseudomonadales</taxon>
        <taxon>Pseudomonadaceae</taxon>
        <taxon>Pseudomonas</taxon>
    </lineage>
</organism>
<sequence>MIDPDGFRPNVGIILTNDAGQVLWARRINQDAWQFPQGGINPDETPEDALYRELNEEVGLERDDVEILACTRGWLRYRLPQRLVRTHSQPLCIGQKQKWFLLRLLSNEQRVRMDLTGKPEFDGWRWVSYWYPLGQVVTFKREVYRRALKELAPRLLTRD</sequence>
<comment type="function">
    <text evidence="1">Accelerates the degradation of transcripts by removing pyrophosphate from the 5'-end of triphosphorylated RNA, leading to a more labile monophosphorylated state that can stimulate subsequent ribonuclease cleavage.</text>
</comment>
<comment type="cofactor">
    <cofactor evidence="1">
        <name>a divalent metal cation</name>
        <dbReference type="ChEBI" id="CHEBI:60240"/>
    </cofactor>
</comment>
<comment type="similarity">
    <text evidence="1">Belongs to the Nudix hydrolase family. RppH subfamily.</text>
</comment>
<proteinExistence type="inferred from homology"/>
<reference key="1">
    <citation type="submission" date="2007-05" db="EMBL/GenBank/DDBJ databases">
        <title>Complete sequence of Pseudomonas putida F1.</title>
        <authorList>
            <consortium name="US DOE Joint Genome Institute"/>
            <person name="Copeland A."/>
            <person name="Lucas S."/>
            <person name="Lapidus A."/>
            <person name="Barry K."/>
            <person name="Detter J.C."/>
            <person name="Glavina del Rio T."/>
            <person name="Hammon N."/>
            <person name="Israni S."/>
            <person name="Dalin E."/>
            <person name="Tice H."/>
            <person name="Pitluck S."/>
            <person name="Chain P."/>
            <person name="Malfatti S."/>
            <person name="Shin M."/>
            <person name="Vergez L."/>
            <person name="Schmutz J."/>
            <person name="Larimer F."/>
            <person name="Land M."/>
            <person name="Hauser L."/>
            <person name="Kyrpides N."/>
            <person name="Lykidis A."/>
            <person name="Parales R."/>
            <person name="Richardson P."/>
        </authorList>
    </citation>
    <scope>NUCLEOTIDE SEQUENCE [LARGE SCALE GENOMIC DNA]</scope>
    <source>
        <strain>ATCC 700007 / DSM 6899 / JCM 31910 / BCRC 17059 / LMG 24140 / F1</strain>
    </source>
</reference>
<evidence type="ECO:0000255" key="1">
    <source>
        <dbReference type="HAMAP-Rule" id="MF_00298"/>
    </source>
</evidence>
<dbReference type="EC" id="3.6.1.-" evidence="1"/>
<dbReference type="EMBL" id="CP000712">
    <property type="protein sequence ID" value="ABQ81171.1"/>
    <property type="molecule type" value="Genomic_DNA"/>
</dbReference>
<dbReference type="SMR" id="A5WAL1"/>
<dbReference type="KEGG" id="ppf:Pput_5053"/>
<dbReference type="eggNOG" id="COG0494">
    <property type="taxonomic scope" value="Bacteria"/>
</dbReference>
<dbReference type="HOGENOM" id="CLU_087195_3_1_6"/>
<dbReference type="GO" id="GO:0005737">
    <property type="term" value="C:cytoplasm"/>
    <property type="evidence" value="ECO:0007669"/>
    <property type="project" value="TreeGrafter"/>
</dbReference>
<dbReference type="GO" id="GO:0034353">
    <property type="term" value="F:mRNA 5'-diphosphatase activity"/>
    <property type="evidence" value="ECO:0007669"/>
    <property type="project" value="TreeGrafter"/>
</dbReference>
<dbReference type="GO" id="GO:0006402">
    <property type="term" value="P:mRNA catabolic process"/>
    <property type="evidence" value="ECO:0007669"/>
    <property type="project" value="TreeGrafter"/>
</dbReference>
<dbReference type="CDD" id="cd03671">
    <property type="entry name" value="NUDIX_Ap4A_hydrolase_plant_like"/>
    <property type="match status" value="1"/>
</dbReference>
<dbReference type="FunFam" id="3.90.79.10:FF:000001">
    <property type="entry name" value="RNA pyrophosphohydrolase"/>
    <property type="match status" value="1"/>
</dbReference>
<dbReference type="Gene3D" id="3.90.79.10">
    <property type="entry name" value="Nucleoside Triphosphate Pyrophosphohydrolase"/>
    <property type="match status" value="1"/>
</dbReference>
<dbReference type="HAMAP" id="MF_00298">
    <property type="entry name" value="Nudix_RppH"/>
    <property type="match status" value="1"/>
</dbReference>
<dbReference type="InterPro" id="IPR020476">
    <property type="entry name" value="Nudix_hydrolase"/>
</dbReference>
<dbReference type="InterPro" id="IPR015797">
    <property type="entry name" value="NUDIX_hydrolase-like_dom_sf"/>
</dbReference>
<dbReference type="InterPro" id="IPR020084">
    <property type="entry name" value="NUDIX_hydrolase_CS"/>
</dbReference>
<dbReference type="InterPro" id="IPR000086">
    <property type="entry name" value="NUDIX_hydrolase_dom"/>
</dbReference>
<dbReference type="InterPro" id="IPR022927">
    <property type="entry name" value="RppH"/>
</dbReference>
<dbReference type="NCBIfam" id="NF001934">
    <property type="entry name" value="PRK00714.1-1"/>
    <property type="match status" value="1"/>
</dbReference>
<dbReference type="NCBIfam" id="NF001937">
    <property type="entry name" value="PRK00714.1-4"/>
    <property type="match status" value="1"/>
</dbReference>
<dbReference type="NCBIfam" id="NF001938">
    <property type="entry name" value="PRK00714.1-5"/>
    <property type="match status" value="1"/>
</dbReference>
<dbReference type="PANTHER" id="PTHR23114">
    <property type="entry name" value="M7GPPPN-MRNA HYDROLASE"/>
    <property type="match status" value="1"/>
</dbReference>
<dbReference type="PANTHER" id="PTHR23114:SF17">
    <property type="entry name" value="M7GPPPN-MRNA HYDROLASE"/>
    <property type="match status" value="1"/>
</dbReference>
<dbReference type="Pfam" id="PF00293">
    <property type="entry name" value="NUDIX"/>
    <property type="match status" value="1"/>
</dbReference>
<dbReference type="PRINTS" id="PR00502">
    <property type="entry name" value="NUDIXFAMILY"/>
</dbReference>
<dbReference type="SUPFAM" id="SSF55811">
    <property type="entry name" value="Nudix"/>
    <property type="match status" value="1"/>
</dbReference>
<dbReference type="PROSITE" id="PS51462">
    <property type="entry name" value="NUDIX"/>
    <property type="match status" value="1"/>
</dbReference>
<dbReference type="PROSITE" id="PS00893">
    <property type="entry name" value="NUDIX_BOX"/>
    <property type="match status" value="1"/>
</dbReference>
<keyword id="KW-0378">Hydrolase</keyword>